<evidence type="ECO:0000250" key="1"/>
<evidence type="ECO:0000255" key="2">
    <source>
        <dbReference type="PROSITE-ProRule" id="PRU01068"/>
    </source>
</evidence>
<evidence type="ECO:0000305" key="3"/>
<evidence type="ECO:0007829" key="4">
    <source>
        <dbReference type="PDB" id="5K3O"/>
    </source>
</evidence>
<evidence type="ECO:0007829" key="5">
    <source>
        <dbReference type="PDB" id="5K45"/>
    </source>
</evidence>
<evidence type="ECO:0007829" key="6">
    <source>
        <dbReference type="PDB" id="5K4G"/>
    </source>
</evidence>
<evidence type="ECO:0007829" key="7">
    <source>
        <dbReference type="PDB" id="6RUE"/>
    </source>
</evidence>
<evidence type="ECO:0007829" key="8">
    <source>
        <dbReference type="PDB" id="6SYH"/>
    </source>
</evidence>
<protein>
    <recommendedName>
        <fullName>L-asparaginase</fullName>
        <shortName>L-ASNase</shortName>
        <ecNumber>3.5.1.1</ecNumber>
    </recommendedName>
    <alternativeName>
        <fullName>L-asparagine amidohydrolase</fullName>
    </alternativeName>
</protein>
<gene>
    <name type="primary">ansA</name>
    <name type="synonym">ansB</name>
    <name type="ordered locus">WS0660</name>
</gene>
<reference key="1">
    <citation type="journal article" date="1996" name="Eur. J. Biochem.">
        <title>Crystal structure and amino acid sequence of Wolinella succinogenes L-asparaginase.</title>
        <authorList>
            <person name="Lubkowski J."/>
            <person name="Palm G.J."/>
            <person name="Gilliland G.L."/>
            <person name="Derst C."/>
            <person name="Roehm K.H."/>
            <person name="Wlodawer A."/>
        </authorList>
    </citation>
    <scope>NUCLEOTIDE SEQUENCE [GENOMIC DNA]</scope>
    <scope>X-RAY CRYSTALLOGRAPHY (2.2 ANGSTROMS)</scope>
</reference>
<reference key="2">
    <citation type="journal article" date="2003" name="Proc. Natl. Acad. Sci. U.S.A.">
        <title>Complete genome sequence and analysis of Wolinella succinogenes.</title>
        <authorList>
            <person name="Baar C."/>
            <person name="Eppinger M."/>
            <person name="Raddatz G."/>
            <person name="Simon J."/>
            <person name="Lanz C."/>
            <person name="Klimmek O."/>
            <person name="Nandakumar R."/>
            <person name="Gross R."/>
            <person name="Rosinus A."/>
            <person name="Keller H."/>
            <person name="Jagtap P."/>
            <person name="Linke B."/>
            <person name="Meyer F."/>
            <person name="Lederer H."/>
            <person name="Schuster S.C."/>
        </authorList>
    </citation>
    <scope>NUCLEOTIDE SEQUENCE [LARGE SCALE GENOMIC DNA]</scope>
    <source>
        <strain>ATCC 29543 / DSM 1740 / CCUG 13145 / JCM 31913 / LMG 7466 / NCTC 11488 / FDC 602W</strain>
    </source>
</reference>
<organism>
    <name type="scientific">Wolinella succinogenes (strain ATCC 29543 / DSM 1740 / CCUG 13145 / JCM 31913 / LMG 7466 / NCTC 11488 / FDC 602W)</name>
    <name type="common">Vibrio succinogenes</name>
    <dbReference type="NCBI Taxonomy" id="273121"/>
    <lineage>
        <taxon>Bacteria</taxon>
        <taxon>Pseudomonadati</taxon>
        <taxon>Campylobacterota</taxon>
        <taxon>Epsilonproteobacteria</taxon>
        <taxon>Campylobacterales</taxon>
        <taxon>Helicobacteraceae</taxon>
        <taxon>Wolinella</taxon>
    </lineage>
</organism>
<feature type="chain" id="PRO_0000171086" description="L-asparaginase">
    <location>
        <begin position="1"/>
        <end position="330"/>
    </location>
</feature>
<feature type="domain" description="Asparaginase/glutaminase" evidence="2">
    <location>
        <begin position="4"/>
        <end position="330"/>
    </location>
</feature>
<feature type="active site" description="O-isoaspartyl threonine intermediate" evidence="3">
    <location>
        <position position="14"/>
    </location>
</feature>
<feature type="binding site" evidence="1">
    <location>
        <begin position="93"/>
        <end position="94"/>
    </location>
    <ligand>
        <name>substrate</name>
    </ligand>
</feature>
<feature type="sequence conflict" description="In Ref. 1; CAA61503/CAA58658." evidence="3" ref="1">
    <original>S</original>
    <variation>P</variation>
    <location>
        <position position="121"/>
    </location>
</feature>
<feature type="strand" evidence="8">
    <location>
        <begin position="5"/>
        <end position="13"/>
    </location>
</feature>
<feature type="helix" evidence="7">
    <location>
        <begin position="14"/>
        <end position="16"/>
    </location>
</feature>
<feature type="strand" evidence="4">
    <location>
        <begin position="28"/>
        <end position="30"/>
    </location>
</feature>
<feature type="helix" evidence="8">
    <location>
        <begin position="32"/>
        <end position="40"/>
    </location>
</feature>
<feature type="helix" evidence="8">
    <location>
        <begin position="42"/>
        <end position="46"/>
    </location>
</feature>
<feature type="strand" evidence="8">
    <location>
        <begin position="49"/>
        <end position="55"/>
    </location>
</feature>
<feature type="helix" evidence="8">
    <location>
        <begin position="60"/>
        <end position="62"/>
    </location>
</feature>
<feature type="helix" evidence="8">
    <location>
        <begin position="65"/>
        <end position="79"/>
    </location>
</feature>
<feature type="strand" evidence="8">
    <location>
        <begin position="86"/>
        <end position="90"/>
    </location>
</feature>
<feature type="strand" evidence="7">
    <location>
        <begin position="93"/>
        <end position="95"/>
    </location>
</feature>
<feature type="helix" evidence="8">
    <location>
        <begin position="96"/>
        <end position="106"/>
    </location>
</feature>
<feature type="strand" evidence="8">
    <location>
        <begin position="113"/>
        <end position="116"/>
    </location>
</feature>
<feature type="helix" evidence="8">
    <location>
        <begin position="129"/>
        <end position="141"/>
    </location>
</feature>
<feature type="helix" evidence="8">
    <location>
        <begin position="143"/>
        <end position="145"/>
    </location>
</feature>
<feature type="strand" evidence="8">
    <location>
        <begin position="150"/>
        <end position="154"/>
    </location>
</feature>
<feature type="strand" evidence="8">
    <location>
        <begin position="157"/>
        <end position="160"/>
    </location>
</feature>
<feature type="turn" evidence="8">
    <location>
        <begin position="161"/>
        <end position="163"/>
    </location>
</feature>
<feature type="strand" evidence="6">
    <location>
        <begin position="168"/>
        <end position="170"/>
    </location>
</feature>
<feature type="turn" evidence="8">
    <location>
        <begin position="178"/>
        <end position="180"/>
    </location>
</feature>
<feature type="strand" evidence="8">
    <location>
        <begin position="183"/>
        <end position="187"/>
    </location>
</feature>
<feature type="strand" evidence="8">
    <location>
        <begin position="190"/>
        <end position="193"/>
    </location>
</feature>
<feature type="strand" evidence="7">
    <location>
        <begin position="195"/>
        <end position="197"/>
    </location>
</feature>
<feature type="helix" evidence="8">
    <location>
        <begin position="202"/>
        <end position="204"/>
    </location>
</feature>
<feature type="strand" evidence="8">
    <location>
        <begin position="218"/>
        <end position="222"/>
    </location>
</feature>
<feature type="helix" evidence="8">
    <location>
        <begin position="230"/>
        <end position="237"/>
    </location>
</feature>
<feature type="strand" evidence="8">
    <location>
        <begin position="241"/>
        <end position="248"/>
    </location>
</feature>
<feature type="turn" evidence="8">
    <location>
        <begin position="249"/>
        <end position="251"/>
    </location>
</feature>
<feature type="helix" evidence="8">
    <location>
        <begin position="255"/>
        <end position="267"/>
    </location>
</feature>
<feature type="strand" evidence="8">
    <location>
        <begin position="270"/>
        <end position="280"/>
    </location>
</feature>
<feature type="strand" evidence="8">
    <location>
        <begin position="284"/>
        <end position="288"/>
    </location>
</feature>
<feature type="helix" evidence="8">
    <location>
        <begin position="290"/>
        <end position="293"/>
    </location>
</feature>
<feature type="strand" evidence="5">
    <location>
        <begin position="295"/>
        <end position="297"/>
    </location>
</feature>
<feature type="strand" evidence="8">
    <location>
        <begin position="299"/>
        <end position="301"/>
    </location>
</feature>
<feature type="helix" evidence="8">
    <location>
        <begin position="303"/>
        <end position="314"/>
    </location>
</feature>
<feature type="helix" evidence="8">
    <location>
        <begin position="320"/>
        <end position="329"/>
    </location>
</feature>
<accession>P50286</accession>
<proteinExistence type="evidence at protein level"/>
<name>ASPG_WOLSU</name>
<dbReference type="EC" id="3.5.1.1"/>
<dbReference type="EMBL" id="X89215">
    <property type="protein sequence ID" value="CAA61503.1"/>
    <property type="molecule type" value="Genomic_DNA"/>
</dbReference>
<dbReference type="EMBL" id="X83689">
    <property type="protein sequence ID" value="CAA58658.1"/>
    <property type="molecule type" value="Genomic_DNA"/>
</dbReference>
<dbReference type="EMBL" id="BX571658">
    <property type="protein sequence ID" value="CAE09790.1"/>
    <property type="status" value="ALT_INIT"/>
    <property type="molecule type" value="Genomic_DNA"/>
</dbReference>
<dbReference type="PIR" id="S74205">
    <property type="entry name" value="S74205"/>
</dbReference>
<dbReference type="RefSeq" id="WP_011138590.1">
    <property type="nucleotide sequence ID" value="NC_005090.1"/>
</dbReference>
<dbReference type="PDB" id="1WSA">
    <property type="method" value="X-ray"/>
    <property type="resolution" value="2.20 A"/>
    <property type="chains" value="A/B=1-330"/>
</dbReference>
<dbReference type="PDB" id="5K3O">
    <property type="method" value="X-ray"/>
    <property type="resolution" value="1.70 A"/>
    <property type="chains" value="A/B/C/D=1-330"/>
</dbReference>
<dbReference type="PDB" id="5K45">
    <property type="method" value="X-ray"/>
    <property type="resolution" value="1.63 A"/>
    <property type="chains" value="A/B/C/D=1-330"/>
</dbReference>
<dbReference type="PDB" id="5K4G">
    <property type="method" value="X-ray"/>
    <property type="resolution" value="1.60 A"/>
    <property type="chains" value="A/B/C/D=1-330"/>
</dbReference>
<dbReference type="PDB" id="5K4H">
    <property type="method" value="X-ray"/>
    <property type="resolution" value="2.00 A"/>
    <property type="chains" value="A/B/C/D/E/F/G/H=1-330"/>
</dbReference>
<dbReference type="PDB" id="6RUD">
    <property type="method" value="X-ray"/>
    <property type="resolution" value="1.70 A"/>
    <property type="chains" value="A/B/C/D=3-330"/>
</dbReference>
<dbReference type="PDB" id="6RUE">
    <property type="method" value="X-ray"/>
    <property type="resolution" value="1.65 A"/>
    <property type="chains" value="A/B/C/D=3-330"/>
</dbReference>
<dbReference type="PDB" id="6RUF">
    <property type="method" value="X-ray"/>
    <property type="resolution" value="2.00 A"/>
    <property type="chains" value="A/B/C/D=3-330"/>
</dbReference>
<dbReference type="PDB" id="6SYH">
    <property type="method" value="X-ray"/>
    <property type="resolution" value="1.50 A"/>
    <property type="chains" value="A/B=3-330"/>
</dbReference>
<dbReference type="PDBsum" id="1WSA"/>
<dbReference type="PDBsum" id="5K3O"/>
<dbReference type="PDBsum" id="5K45"/>
<dbReference type="PDBsum" id="5K4G"/>
<dbReference type="PDBsum" id="5K4H"/>
<dbReference type="PDBsum" id="6RUD"/>
<dbReference type="PDBsum" id="6RUE"/>
<dbReference type="PDBsum" id="6RUF"/>
<dbReference type="PDBsum" id="6SYH"/>
<dbReference type="SMR" id="P50286"/>
<dbReference type="STRING" id="273121.WS0660"/>
<dbReference type="KEGG" id="wsu:WS0660"/>
<dbReference type="eggNOG" id="COG0252">
    <property type="taxonomic scope" value="Bacteria"/>
</dbReference>
<dbReference type="HOGENOM" id="CLU_019134_1_2_7"/>
<dbReference type="BRENDA" id="3.5.1.1">
    <property type="organism ID" value="6642"/>
</dbReference>
<dbReference type="EvolutionaryTrace" id="P50286"/>
<dbReference type="Proteomes" id="UP000000422">
    <property type="component" value="Chromosome"/>
</dbReference>
<dbReference type="GO" id="GO:0005737">
    <property type="term" value="C:cytoplasm"/>
    <property type="evidence" value="ECO:0007669"/>
    <property type="project" value="UniProtKB-SubCell"/>
</dbReference>
<dbReference type="GO" id="GO:0004067">
    <property type="term" value="F:asparaginase activity"/>
    <property type="evidence" value="ECO:0007669"/>
    <property type="project" value="UniProtKB-EC"/>
</dbReference>
<dbReference type="GO" id="GO:0006528">
    <property type="term" value="P:asparagine metabolic process"/>
    <property type="evidence" value="ECO:0007669"/>
    <property type="project" value="InterPro"/>
</dbReference>
<dbReference type="CDD" id="cd08964">
    <property type="entry name" value="L-asparaginase_II"/>
    <property type="match status" value="1"/>
</dbReference>
<dbReference type="FunFam" id="3.40.50.1170:FF:000001">
    <property type="entry name" value="L-asparaginase 2"/>
    <property type="match status" value="1"/>
</dbReference>
<dbReference type="Gene3D" id="3.40.50.40">
    <property type="match status" value="1"/>
</dbReference>
<dbReference type="Gene3D" id="3.40.50.1170">
    <property type="entry name" value="L-asparaginase, N-terminal domain"/>
    <property type="match status" value="1"/>
</dbReference>
<dbReference type="InterPro" id="IPR004550">
    <property type="entry name" value="AsnASE_II"/>
</dbReference>
<dbReference type="InterPro" id="IPR036152">
    <property type="entry name" value="Asp/glu_Ase-like_sf"/>
</dbReference>
<dbReference type="InterPro" id="IPR006034">
    <property type="entry name" value="Asparaginase/glutaminase-like"/>
</dbReference>
<dbReference type="InterPro" id="IPR020827">
    <property type="entry name" value="Asparaginase/glutaminase_AS1"/>
</dbReference>
<dbReference type="InterPro" id="IPR027475">
    <property type="entry name" value="Asparaginase/glutaminase_AS2"/>
</dbReference>
<dbReference type="InterPro" id="IPR040919">
    <property type="entry name" value="Asparaginase_C"/>
</dbReference>
<dbReference type="InterPro" id="IPR027473">
    <property type="entry name" value="L-asparaginase_C"/>
</dbReference>
<dbReference type="InterPro" id="IPR027474">
    <property type="entry name" value="L-asparaginase_N"/>
</dbReference>
<dbReference type="InterPro" id="IPR037152">
    <property type="entry name" value="L-asparaginase_N_sf"/>
</dbReference>
<dbReference type="NCBIfam" id="TIGR00520">
    <property type="entry name" value="asnASE_II"/>
    <property type="match status" value="1"/>
</dbReference>
<dbReference type="PANTHER" id="PTHR11707:SF28">
    <property type="entry name" value="60 KDA LYSOPHOSPHOLIPASE"/>
    <property type="match status" value="1"/>
</dbReference>
<dbReference type="PANTHER" id="PTHR11707">
    <property type="entry name" value="L-ASPARAGINASE"/>
    <property type="match status" value="1"/>
</dbReference>
<dbReference type="Pfam" id="PF00710">
    <property type="entry name" value="Asparaginase"/>
    <property type="match status" value="1"/>
</dbReference>
<dbReference type="Pfam" id="PF17763">
    <property type="entry name" value="Asparaginase_C"/>
    <property type="match status" value="1"/>
</dbReference>
<dbReference type="PIRSF" id="PIRSF001220">
    <property type="entry name" value="L-ASNase_gatD"/>
    <property type="match status" value="1"/>
</dbReference>
<dbReference type="PIRSF" id="PIRSF500176">
    <property type="entry name" value="L_ASNase"/>
    <property type="match status" value="1"/>
</dbReference>
<dbReference type="PRINTS" id="PR00139">
    <property type="entry name" value="ASNGLNASE"/>
</dbReference>
<dbReference type="SMART" id="SM00870">
    <property type="entry name" value="Asparaginase"/>
    <property type="match status" value="1"/>
</dbReference>
<dbReference type="SUPFAM" id="SSF53774">
    <property type="entry name" value="Glutaminase/Asparaginase"/>
    <property type="match status" value="1"/>
</dbReference>
<dbReference type="PROSITE" id="PS00144">
    <property type="entry name" value="ASN_GLN_ASE_1"/>
    <property type="match status" value="1"/>
</dbReference>
<dbReference type="PROSITE" id="PS00917">
    <property type="entry name" value="ASN_GLN_ASE_2"/>
    <property type="match status" value="1"/>
</dbReference>
<dbReference type="PROSITE" id="PS51732">
    <property type="entry name" value="ASN_GLN_ASE_3"/>
    <property type="match status" value="1"/>
</dbReference>
<sequence>MAKPQVTILATGGTIAGSGESSVKSSYSAGAVTVDKLLAAVPAINDLATIKGEQISSIGSQEMTGKVWLKLAKRVNELLAQKETEAVIITHGTDTMEETAFFLNLTVKSQKPVVLVGAMRSGSSMSADGPMNLYNAVNVAINKASTNKGVVIVMNDEIHAAREATKLNTTAVNAFASPNTGKIGTVYYGKVEYFTQSVRPHTLASEFDISKIEELPRVDILYAHPDDTDVLVNAALQAGAKGIIHAGMGNGNPFPLTQNALEKAAKSGVVVARSSRVGSGSTTQEAEVDDKKLGFVATESLNPQKARVLLMLALTKTSDREAIQKIFSTY</sequence>
<keyword id="KW-0002">3D-structure</keyword>
<keyword id="KW-0963">Cytoplasm</keyword>
<keyword id="KW-0378">Hydrolase</keyword>
<keyword id="KW-1185">Reference proteome</keyword>
<comment type="catalytic activity">
    <reaction>
        <text>L-asparagine + H2O = L-aspartate + NH4(+)</text>
        <dbReference type="Rhea" id="RHEA:21016"/>
        <dbReference type="ChEBI" id="CHEBI:15377"/>
        <dbReference type="ChEBI" id="CHEBI:28938"/>
        <dbReference type="ChEBI" id="CHEBI:29991"/>
        <dbReference type="ChEBI" id="CHEBI:58048"/>
        <dbReference type="EC" id="3.5.1.1"/>
    </reaction>
</comment>
<comment type="subunit">
    <text>Homotetramer.</text>
</comment>
<comment type="subcellular location">
    <subcellularLocation>
        <location>Cytoplasm</location>
    </subcellularLocation>
</comment>
<comment type="similarity">
    <text evidence="3">Belongs to the asparaginase 1 family.</text>
</comment>
<comment type="sequence caution" evidence="3">
    <conflict type="erroneous initiation">
        <sequence resource="EMBL-CDS" id="CAE09790"/>
    </conflict>
</comment>